<comment type="function">
    <text evidence="1">Negative regulator of class I heat shock genes (grpE-dnaK-dnaJ and groELS operons). Prevents heat-shock induction of these operons.</text>
</comment>
<comment type="similarity">
    <text evidence="1">Belongs to the HrcA family.</text>
</comment>
<name>HRCA_STRTD</name>
<keyword id="KW-0678">Repressor</keyword>
<keyword id="KW-0346">Stress response</keyword>
<keyword id="KW-0804">Transcription</keyword>
<keyword id="KW-0805">Transcription regulation</keyword>
<evidence type="ECO:0000255" key="1">
    <source>
        <dbReference type="HAMAP-Rule" id="MF_00081"/>
    </source>
</evidence>
<accession>Q03MR8</accession>
<feature type="chain" id="PRO_1000010466" description="Heat-inducible transcription repressor HrcA">
    <location>
        <begin position="1"/>
        <end position="360"/>
    </location>
</feature>
<dbReference type="EMBL" id="CP000419">
    <property type="protein sequence ID" value="ABJ65504.1"/>
    <property type="molecule type" value="Genomic_DNA"/>
</dbReference>
<dbReference type="RefSeq" id="WP_011225328.1">
    <property type="nucleotide sequence ID" value="NC_008532.1"/>
</dbReference>
<dbReference type="SMR" id="Q03MR8"/>
<dbReference type="GeneID" id="66898043"/>
<dbReference type="KEGG" id="ste:STER_0161"/>
<dbReference type="HOGENOM" id="CLU_050019_1_0_9"/>
<dbReference type="GO" id="GO:0003677">
    <property type="term" value="F:DNA binding"/>
    <property type="evidence" value="ECO:0007669"/>
    <property type="project" value="InterPro"/>
</dbReference>
<dbReference type="GO" id="GO:0045892">
    <property type="term" value="P:negative regulation of DNA-templated transcription"/>
    <property type="evidence" value="ECO:0007669"/>
    <property type="project" value="UniProtKB-UniRule"/>
</dbReference>
<dbReference type="Gene3D" id="3.30.450.40">
    <property type="match status" value="1"/>
</dbReference>
<dbReference type="Gene3D" id="3.30.390.60">
    <property type="entry name" value="Heat-inducible transcription repressor hrca homolog, domain 3"/>
    <property type="match status" value="1"/>
</dbReference>
<dbReference type="Gene3D" id="1.10.10.10">
    <property type="entry name" value="Winged helix-like DNA-binding domain superfamily/Winged helix DNA-binding domain"/>
    <property type="match status" value="1"/>
</dbReference>
<dbReference type="HAMAP" id="MF_00081">
    <property type="entry name" value="HrcA"/>
    <property type="match status" value="1"/>
</dbReference>
<dbReference type="InterPro" id="IPR029016">
    <property type="entry name" value="GAF-like_dom_sf"/>
</dbReference>
<dbReference type="InterPro" id="IPR002571">
    <property type="entry name" value="HrcA"/>
</dbReference>
<dbReference type="InterPro" id="IPR021153">
    <property type="entry name" value="HrcA_C"/>
</dbReference>
<dbReference type="InterPro" id="IPR036388">
    <property type="entry name" value="WH-like_DNA-bd_sf"/>
</dbReference>
<dbReference type="InterPro" id="IPR036390">
    <property type="entry name" value="WH_DNA-bd_sf"/>
</dbReference>
<dbReference type="InterPro" id="IPR005104">
    <property type="entry name" value="WHTH_HrcA_DNA-bd"/>
</dbReference>
<dbReference type="InterPro" id="IPR023120">
    <property type="entry name" value="WHTH_transcript_rep_HrcA_IDD"/>
</dbReference>
<dbReference type="NCBIfam" id="TIGR00331">
    <property type="entry name" value="hrcA"/>
    <property type="match status" value="1"/>
</dbReference>
<dbReference type="PANTHER" id="PTHR34824">
    <property type="entry name" value="HEAT-INDUCIBLE TRANSCRIPTION REPRESSOR HRCA"/>
    <property type="match status" value="1"/>
</dbReference>
<dbReference type="PANTHER" id="PTHR34824:SF1">
    <property type="entry name" value="HEAT-INDUCIBLE TRANSCRIPTION REPRESSOR HRCA"/>
    <property type="match status" value="1"/>
</dbReference>
<dbReference type="Pfam" id="PF01628">
    <property type="entry name" value="HrcA"/>
    <property type="match status" value="1"/>
</dbReference>
<dbReference type="Pfam" id="PF03444">
    <property type="entry name" value="HrcA_DNA-bdg"/>
    <property type="match status" value="1"/>
</dbReference>
<dbReference type="PIRSF" id="PIRSF005485">
    <property type="entry name" value="HrcA"/>
    <property type="match status" value="1"/>
</dbReference>
<dbReference type="SUPFAM" id="SSF55781">
    <property type="entry name" value="GAF domain-like"/>
    <property type="match status" value="1"/>
</dbReference>
<dbReference type="SUPFAM" id="SSF46785">
    <property type="entry name" value="Winged helix' DNA-binding domain"/>
    <property type="match status" value="1"/>
</dbReference>
<organism>
    <name type="scientific">Streptococcus thermophilus (strain ATCC BAA-491 / LMD-9)</name>
    <dbReference type="NCBI Taxonomy" id="322159"/>
    <lineage>
        <taxon>Bacteria</taxon>
        <taxon>Bacillati</taxon>
        <taxon>Bacillota</taxon>
        <taxon>Bacilli</taxon>
        <taxon>Lactobacillales</taxon>
        <taxon>Streptococcaceae</taxon>
        <taxon>Streptococcus</taxon>
    </lineage>
</organism>
<protein>
    <recommendedName>
        <fullName evidence="1">Heat-inducible transcription repressor HrcA</fullName>
    </recommendedName>
</protein>
<gene>
    <name evidence="1" type="primary">hrcA</name>
    <name type="ordered locus">STER_0161</name>
</gene>
<sequence>MITQRQNAILNLIVEMFTRTHEPVCSKALQDSIDSSSATIRNDMAKLEKMGYLEKAHISSGRMPSRAGFQYFVANSLNLDTIDEQDVYQVVKAFDFEAFKLEDILDAAAKLLAEMTGCTAVIQDVEPTKQRLTGFEIVQLSNHDALAVLTLDESKPVTVQFAIPKNFLSSDLEIFHKLVQGRFLGNTVLDIHYRLRTETPQIVQKYFKITDNVLDLFDYIFSHLFKELIFIEGKVASLAYADLKTYQFLDNPQHVALALRSAISDDEVTKISVAESTEEALENVTVMSHKFLIPYRGTALMHVIGPIEMDYRRMVSLVNVISRVLVMKLTDYYRYLNSNHYEVFLSRNVLKNIERGECLD</sequence>
<proteinExistence type="inferred from homology"/>
<reference key="1">
    <citation type="journal article" date="2006" name="Proc. Natl. Acad. Sci. U.S.A.">
        <title>Comparative genomics of the lactic acid bacteria.</title>
        <authorList>
            <person name="Makarova K.S."/>
            <person name="Slesarev A."/>
            <person name="Wolf Y.I."/>
            <person name="Sorokin A."/>
            <person name="Mirkin B."/>
            <person name="Koonin E.V."/>
            <person name="Pavlov A."/>
            <person name="Pavlova N."/>
            <person name="Karamychev V."/>
            <person name="Polouchine N."/>
            <person name="Shakhova V."/>
            <person name="Grigoriev I."/>
            <person name="Lou Y."/>
            <person name="Rohksar D."/>
            <person name="Lucas S."/>
            <person name="Huang K."/>
            <person name="Goodstein D.M."/>
            <person name="Hawkins T."/>
            <person name="Plengvidhya V."/>
            <person name="Welker D."/>
            <person name="Hughes J."/>
            <person name="Goh Y."/>
            <person name="Benson A."/>
            <person name="Baldwin K."/>
            <person name="Lee J.-H."/>
            <person name="Diaz-Muniz I."/>
            <person name="Dosti B."/>
            <person name="Smeianov V."/>
            <person name="Wechter W."/>
            <person name="Barabote R."/>
            <person name="Lorca G."/>
            <person name="Altermann E."/>
            <person name="Barrangou R."/>
            <person name="Ganesan B."/>
            <person name="Xie Y."/>
            <person name="Rawsthorne H."/>
            <person name="Tamir D."/>
            <person name="Parker C."/>
            <person name="Breidt F."/>
            <person name="Broadbent J.R."/>
            <person name="Hutkins R."/>
            <person name="O'Sullivan D."/>
            <person name="Steele J."/>
            <person name="Unlu G."/>
            <person name="Saier M.H. Jr."/>
            <person name="Klaenhammer T."/>
            <person name="Richardson P."/>
            <person name="Kozyavkin S."/>
            <person name="Weimer B.C."/>
            <person name="Mills D.A."/>
        </authorList>
    </citation>
    <scope>NUCLEOTIDE SEQUENCE [LARGE SCALE GENOMIC DNA]</scope>
    <source>
        <strain>ATCC BAA-491 / LMD-9</strain>
    </source>
</reference>